<protein>
    <recommendedName>
        <fullName>UPF0758 protein Maqu_3564</fullName>
    </recommendedName>
</protein>
<keyword id="KW-0378">Hydrolase</keyword>
<keyword id="KW-0479">Metal-binding</keyword>
<keyword id="KW-0482">Metalloprotease</keyword>
<keyword id="KW-0645">Protease</keyword>
<keyword id="KW-0862">Zinc</keyword>
<evidence type="ECO:0000255" key="1">
    <source>
        <dbReference type="PROSITE-ProRule" id="PRU01182"/>
    </source>
</evidence>
<evidence type="ECO:0000305" key="2"/>
<sequence length="224" mass="24938">MTDSSWPTDERPRERLLAHGAQSLSDAELLAIFLRTGTTGMPVMALARHLIDEFSGLRGLMTASRRQFLQVKGLGTAKYAQVQAAMEMARRVMDEPLRQGDPLRSPADTRRFLTSRLGTYPHEVFAGLFLDNRHRVIQYRELFRGTIDGAAVYPREVVRQALEDNAAAVIFAHNHPSGVAEPSQADISLTRRLKEALGLVDIRVLDHMVIGHGEVISLAERGLM</sequence>
<accession>A1U6L4</accession>
<gene>
    <name type="ordered locus">Maqu_3564</name>
</gene>
<dbReference type="EMBL" id="CP000514">
    <property type="protein sequence ID" value="ABM20633.1"/>
    <property type="molecule type" value="Genomic_DNA"/>
</dbReference>
<dbReference type="RefSeq" id="WP_011786974.1">
    <property type="nucleotide sequence ID" value="NC_008740.1"/>
</dbReference>
<dbReference type="SMR" id="A1U6L4"/>
<dbReference type="STRING" id="351348.Maqu_3564"/>
<dbReference type="KEGG" id="maq:Maqu_3564"/>
<dbReference type="eggNOG" id="COG2003">
    <property type="taxonomic scope" value="Bacteria"/>
</dbReference>
<dbReference type="HOGENOM" id="CLU_073529_0_0_6"/>
<dbReference type="OrthoDB" id="9804482at2"/>
<dbReference type="Proteomes" id="UP000000998">
    <property type="component" value="Chromosome"/>
</dbReference>
<dbReference type="GO" id="GO:0046872">
    <property type="term" value="F:metal ion binding"/>
    <property type="evidence" value="ECO:0007669"/>
    <property type="project" value="UniProtKB-KW"/>
</dbReference>
<dbReference type="GO" id="GO:0008237">
    <property type="term" value="F:metallopeptidase activity"/>
    <property type="evidence" value="ECO:0007669"/>
    <property type="project" value="UniProtKB-KW"/>
</dbReference>
<dbReference type="GO" id="GO:0006508">
    <property type="term" value="P:proteolysis"/>
    <property type="evidence" value="ECO:0007669"/>
    <property type="project" value="UniProtKB-KW"/>
</dbReference>
<dbReference type="CDD" id="cd08071">
    <property type="entry name" value="MPN_DUF2466"/>
    <property type="match status" value="1"/>
</dbReference>
<dbReference type="Gene3D" id="3.40.140.10">
    <property type="entry name" value="Cytidine Deaminase, domain 2"/>
    <property type="match status" value="1"/>
</dbReference>
<dbReference type="InterPro" id="IPR037518">
    <property type="entry name" value="MPN"/>
</dbReference>
<dbReference type="InterPro" id="IPR025657">
    <property type="entry name" value="RadC_JAB"/>
</dbReference>
<dbReference type="InterPro" id="IPR010994">
    <property type="entry name" value="RuvA_2-like"/>
</dbReference>
<dbReference type="InterPro" id="IPR001405">
    <property type="entry name" value="UPF0758"/>
</dbReference>
<dbReference type="InterPro" id="IPR020891">
    <property type="entry name" value="UPF0758_CS"/>
</dbReference>
<dbReference type="InterPro" id="IPR046778">
    <property type="entry name" value="UPF0758_N"/>
</dbReference>
<dbReference type="NCBIfam" id="NF000642">
    <property type="entry name" value="PRK00024.1"/>
    <property type="match status" value="1"/>
</dbReference>
<dbReference type="NCBIfam" id="TIGR00608">
    <property type="entry name" value="radc"/>
    <property type="match status" value="1"/>
</dbReference>
<dbReference type="PANTHER" id="PTHR30471">
    <property type="entry name" value="DNA REPAIR PROTEIN RADC"/>
    <property type="match status" value="1"/>
</dbReference>
<dbReference type="PANTHER" id="PTHR30471:SF3">
    <property type="entry name" value="UPF0758 PROTEIN YEES-RELATED"/>
    <property type="match status" value="1"/>
</dbReference>
<dbReference type="Pfam" id="PF04002">
    <property type="entry name" value="RadC"/>
    <property type="match status" value="1"/>
</dbReference>
<dbReference type="Pfam" id="PF20582">
    <property type="entry name" value="UPF0758_N"/>
    <property type="match status" value="1"/>
</dbReference>
<dbReference type="SUPFAM" id="SSF102712">
    <property type="entry name" value="JAB1/MPN domain"/>
    <property type="match status" value="1"/>
</dbReference>
<dbReference type="SUPFAM" id="SSF47781">
    <property type="entry name" value="RuvA domain 2-like"/>
    <property type="match status" value="1"/>
</dbReference>
<dbReference type="PROSITE" id="PS50249">
    <property type="entry name" value="MPN"/>
    <property type="match status" value="1"/>
</dbReference>
<dbReference type="PROSITE" id="PS01302">
    <property type="entry name" value="UPF0758"/>
    <property type="match status" value="1"/>
</dbReference>
<proteinExistence type="inferred from homology"/>
<reference key="1">
    <citation type="journal article" date="2011" name="Appl. Environ. Microbiol.">
        <title>Genomic potential of Marinobacter aquaeolei, a biogeochemical 'opportunitroph'.</title>
        <authorList>
            <person name="Singer E."/>
            <person name="Webb E.A."/>
            <person name="Nelson W.C."/>
            <person name="Heidelberg J.F."/>
            <person name="Ivanova N."/>
            <person name="Pati A."/>
            <person name="Edwards K.J."/>
        </authorList>
    </citation>
    <scope>NUCLEOTIDE SEQUENCE [LARGE SCALE GENOMIC DNA]</scope>
    <source>
        <strain>ATCC 700491 / DSM 11845 / VT8</strain>
    </source>
</reference>
<name>Y3564_MARN8</name>
<organism>
    <name type="scientific">Marinobacter nauticus (strain ATCC 700491 / DSM 11845 / VT8)</name>
    <name type="common">Marinobacter aquaeolei</name>
    <dbReference type="NCBI Taxonomy" id="351348"/>
    <lineage>
        <taxon>Bacteria</taxon>
        <taxon>Pseudomonadati</taxon>
        <taxon>Pseudomonadota</taxon>
        <taxon>Gammaproteobacteria</taxon>
        <taxon>Pseudomonadales</taxon>
        <taxon>Marinobacteraceae</taxon>
        <taxon>Marinobacter</taxon>
    </lineage>
</organism>
<feature type="chain" id="PRO_1000001664" description="UPF0758 protein Maqu_3564">
    <location>
        <begin position="1"/>
        <end position="224"/>
    </location>
</feature>
<feature type="domain" description="MPN" evidence="1">
    <location>
        <begin position="102"/>
        <end position="224"/>
    </location>
</feature>
<feature type="short sequence motif" description="JAMM motif" evidence="1">
    <location>
        <begin position="173"/>
        <end position="186"/>
    </location>
</feature>
<feature type="binding site" evidence="1">
    <location>
        <position position="173"/>
    </location>
    <ligand>
        <name>Zn(2+)</name>
        <dbReference type="ChEBI" id="CHEBI:29105"/>
        <note>catalytic</note>
    </ligand>
</feature>
<feature type="binding site" evidence="1">
    <location>
        <position position="175"/>
    </location>
    <ligand>
        <name>Zn(2+)</name>
        <dbReference type="ChEBI" id="CHEBI:29105"/>
        <note>catalytic</note>
    </ligand>
</feature>
<feature type="binding site" evidence="1">
    <location>
        <position position="186"/>
    </location>
    <ligand>
        <name>Zn(2+)</name>
        <dbReference type="ChEBI" id="CHEBI:29105"/>
        <note>catalytic</note>
    </ligand>
</feature>
<comment type="similarity">
    <text evidence="2">Belongs to the UPF0758 family.</text>
</comment>